<reference key="1">
    <citation type="journal article" date="1999" name="Nature">
        <title>Sequence and analysis of chromosome 4 of the plant Arabidopsis thaliana.</title>
        <authorList>
            <person name="Mayer K.F.X."/>
            <person name="Schueller C."/>
            <person name="Wambutt R."/>
            <person name="Murphy G."/>
            <person name="Volckaert G."/>
            <person name="Pohl T."/>
            <person name="Duesterhoeft A."/>
            <person name="Stiekema W."/>
            <person name="Entian K.-D."/>
            <person name="Terryn N."/>
            <person name="Harris B."/>
            <person name="Ansorge W."/>
            <person name="Brandt P."/>
            <person name="Grivell L.A."/>
            <person name="Rieger M."/>
            <person name="Weichselgartner M."/>
            <person name="de Simone V."/>
            <person name="Obermaier B."/>
            <person name="Mache R."/>
            <person name="Mueller M."/>
            <person name="Kreis M."/>
            <person name="Delseny M."/>
            <person name="Puigdomenech P."/>
            <person name="Watson M."/>
            <person name="Schmidtheini T."/>
            <person name="Reichert B."/>
            <person name="Portetelle D."/>
            <person name="Perez-Alonso M."/>
            <person name="Boutry M."/>
            <person name="Bancroft I."/>
            <person name="Vos P."/>
            <person name="Hoheisel J."/>
            <person name="Zimmermann W."/>
            <person name="Wedler H."/>
            <person name="Ridley P."/>
            <person name="Langham S.-A."/>
            <person name="McCullagh B."/>
            <person name="Bilham L."/>
            <person name="Robben J."/>
            <person name="van der Schueren J."/>
            <person name="Grymonprez B."/>
            <person name="Chuang Y.-J."/>
            <person name="Vandenbussche F."/>
            <person name="Braeken M."/>
            <person name="Weltjens I."/>
            <person name="Voet M."/>
            <person name="Bastiaens I."/>
            <person name="Aert R."/>
            <person name="Defoor E."/>
            <person name="Weitzenegger T."/>
            <person name="Bothe G."/>
            <person name="Ramsperger U."/>
            <person name="Hilbert H."/>
            <person name="Braun M."/>
            <person name="Holzer E."/>
            <person name="Brandt A."/>
            <person name="Peters S."/>
            <person name="van Staveren M."/>
            <person name="Dirkse W."/>
            <person name="Mooijman P."/>
            <person name="Klein Lankhorst R."/>
            <person name="Rose M."/>
            <person name="Hauf J."/>
            <person name="Koetter P."/>
            <person name="Berneiser S."/>
            <person name="Hempel S."/>
            <person name="Feldpausch M."/>
            <person name="Lamberth S."/>
            <person name="Van den Daele H."/>
            <person name="De Keyser A."/>
            <person name="Buysshaert C."/>
            <person name="Gielen J."/>
            <person name="Villarroel R."/>
            <person name="De Clercq R."/>
            <person name="van Montagu M."/>
            <person name="Rogers J."/>
            <person name="Cronin A."/>
            <person name="Quail M.A."/>
            <person name="Bray-Allen S."/>
            <person name="Clark L."/>
            <person name="Doggett J."/>
            <person name="Hall S."/>
            <person name="Kay M."/>
            <person name="Lennard N."/>
            <person name="McLay K."/>
            <person name="Mayes R."/>
            <person name="Pettett A."/>
            <person name="Rajandream M.A."/>
            <person name="Lyne M."/>
            <person name="Benes V."/>
            <person name="Rechmann S."/>
            <person name="Borkova D."/>
            <person name="Bloecker H."/>
            <person name="Scharfe M."/>
            <person name="Grimm M."/>
            <person name="Loehnert T.-H."/>
            <person name="Dose S."/>
            <person name="de Haan M."/>
            <person name="Maarse A.C."/>
            <person name="Schaefer M."/>
            <person name="Mueller-Auer S."/>
            <person name="Gabel C."/>
            <person name="Fuchs M."/>
            <person name="Fartmann B."/>
            <person name="Granderath K."/>
            <person name="Dauner D."/>
            <person name="Herzl A."/>
            <person name="Neumann S."/>
            <person name="Argiriou A."/>
            <person name="Vitale D."/>
            <person name="Liguori R."/>
            <person name="Piravandi E."/>
            <person name="Massenet O."/>
            <person name="Quigley F."/>
            <person name="Clabauld G."/>
            <person name="Muendlein A."/>
            <person name="Felber R."/>
            <person name="Schnabl S."/>
            <person name="Hiller R."/>
            <person name="Schmidt W."/>
            <person name="Lecharny A."/>
            <person name="Aubourg S."/>
            <person name="Chefdor F."/>
            <person name="Cooke R."/>
            <person name="Berger C."/>
            <person name="Monfort A."/>
            <person name="Casacuberta E."/>
            <person name="Gibbons T."/>
            <person name="Weber N."/>
            <person name="Vandenbol M."/>
            <person name="Bargues M."/>
            <person name="Terol J."/>
            <person name="Torres A."/>
            <person name="Perez-Perez A."/>
            <person name="Purnelle B."/>
            <person name="Bent E."/>
            <person name="Johnson S."/>
            <person name="Tacon D."/>
            <person name="Jesse T."/>
            <person name="Heijnen L."/>
            <person name="Schwarz S."/>
            <person name="Scholler P."/>
            <person name="Heber S."/>
            <person name="Francs P."/>
            <person name="Bielke C."/>
            <person name="Frishman D."/>
            <person name="Haase D."/>
            <person name="Lemcke K."/>
            <person name="Mewes H.-W."/>
            <person name="Stocker S."/>
            <person name="Zaccaria P."/>
            <person name="Bevan M."/>
            <person name="Wilson R.K."/>
            <person name="de la Bastide M."/>
            <person name="Habermann K."/>
            <person name="Parnell L."/>
            <person name="Dedhia N."/>
            <person name="Gnoj L."/>
            <person name="Schutz K."/>
            <person name="Huang E."/>
            <person name="Spiegel L."/>
            <person name="Sekhon M."/>
            <person name="Murray J."/>
            <person name="Sheet P."/>
            <person name="Cordes M."/>
            <person name="Abu-Threideh J."/>
            <person name="Stoneking T."/>
            <person name="Kalicki J."/>
            <person name="Graves T."/>
            <person name="Harmon G."/>
            <person name="Edwards J."/>
            <person name="Latreille P."/>
            <person name="Courtney L."/>
            <person name="Cloud J."/>
            <person name="Abbott A."/>
            <person name="Scott K."/>
            <person name="Johnson D."/>
            <person name="Minx P."/>
            <person name="Bentley D."/>
            <person name="Fulton B."/>
            <person name="Miller N."/>
            <person name="Greco T."/>
            <person name="Kemp K."/>
            <person name="Kramer J."/>
            <person name="Fulton L."/>
            <person name="Mardis E."/>
            <person name="Dante M."/>
            <person name="Pepin K."/>
            <person name="Hillier L.W."/>
            <person name="Nelson J."/>
            <person name="Spieth J."/>
            <person name="Ryan E."/>
            <person name="Andrews S."/>
            <person name="Geisel C."/>
            <person name="Layman D."/>
            <person name="Du H."/>
            <person name="Ali J."/>
            <person name="Berghoff A."/>
            <person name="Jones K."/>
            <person name="Drone K."/>
            <person name="Cotton M."/>
            <person name="Joshu C."/>
            <person name="Antonoiu B."/>
            <person name="Zidanic M."/>
            <person name="Strong C."/>
            <person name="Sun H."/>
            <person name="Lamar B."/>
            <person name="Yordan C."/>
            <person name="Ma P."/>
            <person name="Zhong J."/>
            <person name="Preston R."/>
            <person name="Vil D."/>
            <person name="Shekher M."/>
            <person name="Matero A."/>
            <person name="Shah R."/>
            <person name="Swaby I.K."/>
            <person name="O'Shaughnessy A."/>
            <person name="Rodriguez M."/>
            <person name="Hoffman J."/>
            <person name="Till S."/>
            <person name="Granat S."/>
            <person name="Shohdy N."/>
            <person name="Hasegawa A."/>
            <person name="Hameed A."/>
            <person name="Lodhi M."/>
            <person name="Johnson A."/>
            <person name="Chen E."/>
            <person name="Marra M.A."/>
            <person name="Martienssen R."/>
            <person name="McCombie W.R."/>
        </authorList>
    </citation>
    <scope>NUCLEOTIDE SEQUENCE [LARGE SCALE GENOMIC DNA]</scope>
    <source>
        <strain>cv. Columbia</strain>
    </source>
</reference>
<reference key="2">
    <citation type="journal article" date="2017" name="Plant J.">
        <title>Araport11: a complete reannotation of the Arabidopsis thaliana reference genome.</title>
        <authorList>
            <person name="Cheng C.Y."/>
            <person name="Krishnakumar V."/>
            <person name="Chan A.P."/>
            <person name="Thibaud-Nissen F."/>
            <person name="Schobel S."/>
            <person name="Town C.D."/>
        </authorList>
    </citation>
    <scope>GENOME REANNOTATION</scope>
    <source>
        <strain>cv. Columbia</strain>
    </source>
</reference>
<reference key="3">
    <citation type="submission" date="2005-03" db="EMBL/GenBank/DDBJ databases">
        <title>Large-scale analysis of RIKEN Arabidopsis full-length (RAFL) cDNAs.</title>
        <authorList>
            <person name="Totoki Y."/>
            <person name="Seki M."/>
            <person name="Ishida J."/>
            <person name="Nakajima M."/>
            <person name="Enju A."/>
            <person name="Kamiya A."/>
            <person name="Narusaka M."/>
            <person name="Shin-i T."/>
            <person name="Nakagawa M."/>
            <person name="Sakamoto N."/>
            <person name="Oishi K."/>
            <person name="Kohara Y."/>
            <person name="Kobayashi M."/>
            <person name="Toyoda A."/>
            <person name="Sakaki Y."/>
            <person name="Sakurai T."/>
            <person name="Iida K."/>
            <person name="Akiyama K."/>
            <person name="Satou M."/>
            <person name="Toyoda T."/>
            <person name="Konagaya A."/>
            <person name="Carninci P."/>
            <person name="Kawai J."/>
            <person name="Hayashizaki Y."/>
            <person name="Shinozaki K."/>
        </authorList>
    </citation>
    <scope>NUCLEOTIDE SEQUENCE [LARGE SCALE MRNA]</scope>
    <source>
        <strain>cv. Columbia</strain>
    </source>
</reference>
<proteinExistence type="evidence at transcript level"/>
<evidence type="ECO:0000256" key="1">
    <source>
        <dbReference type="SAM" id="MobiDB-lite"/>
    </source>
</evidence>
<evidence type="ECO:0000305" key="2"/>
<feature type="chain" id="PRO_0000363414" description="Uncharacterized protein At4g22758">
    <location>
        <begin position="1"/>
        <end position="255"/>
    </location>
</feature>
<feature type="region of interest" description="Disordered" evidence="1">
    <location>
        <begin position="1"/>
        <end position="78"/>
    </location>
</feature>
<feature type="compositionally biased region" description="Basic residues" evidence="1">
    <location>
        <begin position="1"/>
        <end position="10"/>
    </location>
</feature>
<feature type="compositionally biased region" description="Basic and acidic residues" evidence="1">
    <location>
        <begin position="44"/>
        <end position="61"/>
    </location>
</feature>
<protein>
    <recommendedName>
        <fullName>Uncharacterized protein At4g22758</fullName>
    </recommendedName>
</protein>
<organism>
    <name type="scientific">Arabidopsis thaliana</name>
    <name type="common">Mouse-ear cress</name>
    <dbReference type="NCBI Taxonomy" id="3702"/>
    <lineage>
        <taxon>Eukaryota</taxon>
        <taxon>Viridiplantae</taxon>
        <taxon>Streptophyta</taxon>
        <taxon>Embryophyta</taxon>
        <taxon>Tracheophyta</taxon>
        <taxon>Spermatophyta</taxon>
        <taxon>Magnoliopsida</taxon>
        <taxon>eudicotyledons</taxon>
        <taxon>Gunneridae</taxon>
        <taxon>Pentapetalae</taxon>
        <taxon>rosids</taxon>
        <taxon>malvids</taxon>
        <taxon>Brassicales</taxon>
        <taxon>Brassicaceae</taxon>
        <taxon>Camelineae</taxon>
        <taxon>Arabidopsis</taxon>
    </lineage>
</organism>
<comment type="sequence caution" evidence="2">
    <conflict type="erroneous gene model prediction">
        <sequence resource="EMBL-CDS" id="CAA16561"/>
    </conflict>
    <text>The predicted gene has been split into 2 genes: At4g22758 and At4g22760.</text>
</comment>
<comment type="sequence caution" evidence="2">
    <conflict type="erroneous gene model prediction">
        <sequence resource="EMBL-CDS" id="CAB79231"/>
    </conflict>
    <text>The predicted gene has been split into 2 genes: At4g22758 and At4g22760.</text>
</comment>
<dbReference type="EMBL" id="AL021635">
    <property type="protein sequence ID" value="CAA16561.1"/>
    <property type="status" value="ALT_SEQ"/>
    <property type="molecule type" value="Genomic_DNA"/>
</dbReference>
<dbReference type="EMBL" id="AL161557">
    <property type="protein sequence ID" value="CAB79231.1"/>
    <property type="status" value="ALT_SEQ"/>
    <property type="molecule type" value="Genomic_DNA"/>
</dbReference>
<dbReference type="EMBL" id="CP002687">
    <property type="protein sequence ID" value="AEE84654.1"/>
    <property type="molecule type" value="Genomic_DNA"/>
</dbReference>
<dbReference type="EMBL" id="AK221677">
    <property type="protein sequence ID" value="BAD95370.1"/>
    <property type="molecule type" value="mRNA"/>
</dbReference>
<dbReference type="PIR" id="T04571">
    <property type="entry name" value="T04571"/>
</dbReference>
<dbReference type="RefSeq" id="NP_001190802.1">
    <property type="nucleotide sequence ID" value="NM_001203873.2"/>
</dbReference>
<dbReference type="SMR" id="Q56XJ7"/>
<dbReference type="FunCoup" id="Q56XJ7">
    <property type="interactions" value="335"/>
</dbReference>
<dbReference type="iPTMnet" id="Q56XJ7"/>
<dbReference type="PaxDb" id="3702-AT4G22758.1"/>
<dbReference type="ProteomicsDB" id="242890"/>
<dbReference type="EnsemblPlants" id="AT4G22758.1">
    <property type="protein sequence ID" value="AT4G22758.1"/>
    <property type="gene ID" value="AT4G22758"/>
</dbReference>
<dbReference type="GeneID" id="10723027"/>
<dbReference type="Gramene" id="AT4G22758.1">
    <property type="protein sequence ID" value="AT4G22758.1"/>
    <property type="gene ID" value="AT4G22758"/>
</dbReference>
<dbReference type="KEGG" id="ath:AT4G22758"/>
<dbReference type="Araport" id="AT4G22758"/>
<dbReference type="TAIR" id="AT4G22758"/>
<dbReference type="eggNOG" id="KOG4197">
    <property type="taxonomic scope" value="Eukaryota"/>
</dbReference>
<dbReference type="HOGENOM" id="CLU_065461_1_0_1"/>
<dbReference type="InParanoid" id="Q56XJ7"/>
<dbReference type="OMA" id="HRDTNYK"/>
<dbReference type="OrthoDB" id="1885101at2759"/>
<dbReference type="PhylomeDB" id="Q56XJ7"/>
<dbReference type="PRO" id="PR:Q56XJ7"/>
<dbReference type="Proteomes" id="UP000006548">
    <property type="component" value="Chromosome 4"/>
</dbReference>
<dbReference type="ExpressionAtlas" id="Q56XJ7">
    <property type="expression patterns" value="baseline and differential"/>
</dbReference>
<dbReference type="InterPro" id="IPR040358">
    <property type="entry name" value="At4g22758-like"/>
</dbReference>
<dbReference type="InterPro" id="IPR055482">
    <property type="entry name" value="DUF7054"/>
</dbReference>
<dbReference type="PANTHER" id="PTHR33270">
    <property type="entry name" value="BNAC05G50380D PROTEIN"/>
    <property type="match status" value="1"/>
</dbReference>
<dbReference type="PANTHER" id="PTHR33270:SF6">
    <property type="entry name" value="OS02G0448600 PROTEIN"/>
    <property type="match status" value="1"/>
</dbReference>
<dbReference type="Pfam" id="PF23156">
    <property type="entry name" value="DUF7054"/>
    <property type="match status" value="1"/>
</dbReference>
<name>Y4276_ARATH</name>
<accession>Q56XJ7</accession>
<accession>O49657</accession>
<keyword id="KW-1185">Reference proteome</keyword>
<sequence>MSDSIHRRKVSNPVGNGGRSSRTRRTAFRYVSDKNNRSKSSNKVFERSFSEPSLNRHRDGQSNHLRRPSPMRGLPMEEETKPIVYLPRIRSEVFASSPSLLNLYSPSSSSPINQEGNTKEAPKVIISVAVEGSPGPVRAMVKLSCNVEETIKIVVDKYCKEGRTPKLDRDSAFELHQSHFSIQCLEKREIIGELGSRSFYMRKKAPETGGSFAGISPARTSLIPSSNLIGSCIAQLIGKIMRRTRRIWNILVCVQ</sequence>
<gene>
    <name type="ordered locus">At4g22758</name>
    <name type="ORF">T12H17.150</name>
</gene>